<feature type="chain" id="PRO_0000311936" description="Synaptotagmin-17">
    <location>
        <begin position="1"/>
        <end position="474"/>
    </location>
</feature>
<feature type="domain" description="C2 1" evidence="3">
    <location>
        <begin position="184"/>
        <end position="310"/>
    </location>
</feature>
<feature type="domain" description="C2 2" evidence="3">
    <location>
        <begin position="321"/>
        <end position="455"/>
    </location>
</feature>
<feature type="region of interest" description="Disordered" evidence="4">
    <location>
        <begin position="60"/>
        <end position="112"/>
    </location>
</feature>
<feature type="compositionally biased region" description="Low complexity" evidence="4">
    <location>
        <begin position="96"/>
        <end position="112"/>
    </location>
</feature>
<feature type="modified residue" description="Phosphoserine" evidence="2">
    <location>
        <position position="118"/>
    </location>
</feature>
<feature type="modified residue" description="Phosphoserine" evidence="2">
    <location>
        <position position="119"/>
    </location>
</feature>
<feature type="sequence conflict" description="In Ref. 1; AAF37825." evidence="7" ref="1">
    <original>S</original>
    <variation>G</variation>
    <location>
        <position position="66"/>
    </location>
</feature>
<feature type="strand" evidence="8">
    <location>
        <begin position="187"/>
        <end position="195"/>
    </location>
</feature>
<feature type="turn" evidence="8">
    <location>
        <begin position="196"/>
        <end position="199"/>
    </location>
</feature>
<feature type="strand" evidence="8">
    <location>
        <begin position="200"/>
        <end position="209"/>
    </location>
</feature>
<feature type="strand" evidence="8">
    <location>
        <begin position="230"/>
        <end position="236"/>
    </location>
</feature>
<feature type="helix" evidence="8">
    <location>
        <begin position="266"/>
        <end position="271"/>
    </location>
</feature>
<feature type="strand" evidence="8">
    <location>
        <begin position="272"/>
        <end position="279"/>
    </location>
</feature>
<feature type="strand" evidence="8">
    <location>
        <begin position="291"/>
        <end position="296"/>
    </location>
</feature>
<feature type="turn" evidence="8">
    <location>
        <begin position="297"/>
        <end position="299"/>
    </location>
</feature>
<feature type="turn" evidence="8">
    <location>
        <begin position="302"/>
        <end position="304"/>
    </location>
</feature>
<feature type="strand" evidence="8">
    <location>
        <begin position="308"/>
        <end position="310"/>
    </location>
</feature>
<organism>
    <name type="scientific">Homo sapiens</name>
    <name type="common">Human</name>
    <dbReference type="NCBI Taxonomy" id="9606"/>
    <lineage>
        <taxon>Eukaryota</taxon>
        <taxon>Metazoa</taxon>
        <taxon>Chordata</taxon>
        <taxon>Craniata</taxon>
        <taxon>Vertebrata</taxon>
        <taxon>Euteleostomi</taxon>
        <taxon>Mammalia</taxon>
        <taxon>Eutheria</taxon>
        <taxon>Euarchontoglires</taxon>
        <taxon>Primates</taxon>
        <taxon>Haplorrhini</taxon>
        <taxon>Catarrhini</taxon>
        <taxon>Hominidae</taxon>
        <taxon>Homo</taxon>
    </lineage>
</organism>
<dbReference type="EMBL" id="AF220560">
    <property type="protein sequence ID" value="AAF37825.1"/>
    <property type="molecule type" value="mRNA"/>
</dbReference>
<dbReference type="EMBL" id="CH471186">
    <property type="protein sequence ID" value="EAW50274.1"/>
    <property type="molecule type" value="Genomic_DNA"/>
</dbReference>
<dbReference type="EMBL" id="BC004518">
    <property type="protein sequence ID" value="AAH04518.1"/>
    <property type="molecule type" value="mRNA"/>
</dbReference>
<dbReference type="EMBL" id="AC003003">
    <property type="protein sequence ID" value="AAC05436.1"/>
    <property type="molecule type" value="Genomic_DNA"/>
</dbReference>
<dbReference type="CCDS" id="CCDS10575.1"/>
<dbReference type="RefSeq" id="NP_057608.2">
    <property type="nucleotide sequence ID" value="NM_016524.3"/>
</dbReference>
<dbReference type="PDB" id="2ENP">
    <property type="method" value="NMR"/>
    <property type="chains" value="A=181-315"/>
</dbReference>
<dbReference type="PDBsum" id="2ENP"/>
<dbReference type="SMR" id="Q9BSW7"/>
<dbReference type="BioGRID" id="119717">
    <property type="interactions" value="61"/>
</dbReference>
<dbReference type="FunCoup" id="Q9BSW7">
    <property type="interactions" value="44"/>
</dbReference>
<dbReference type="IntAct" id="Q9BSW7">
    <property type="interactions" value="50"/>
</dbReference>
<dbReference type="STRING" id="9606.ENSP00000347538"/>
<dbReference type="iPTMnet" id="Q9BSW7"/>
<dbReference type="PhosphoSitePlus" id="Q9BSW7"/>
<dbReference type="BioMuta" id="SYT17"/>
<dbReference type="DMDM" id="74752317"/>
<dbReference type="jPOST" id="Q9BSW7"/>
<dbReference type="MassIVE" id="Q9BSW7"/>
<dbReference type="PaxDb" id="9606-ENSP00000347538"/>
<dbReference type="PeptideAtlas" id="Q9BSW7"/>
<dbReference type="ProteomicsDB" id="78932"/>
<dbReference type="Antibodypedia" id="25349">
    <property type="antibodies" value="149 antibodies from 22 providers"/>
</dbReference>
<dbReference type="DNASU" id="51760"/>
<dbReference type="Ensembl" id="ENST00000355377.7">
    <property type="protein sequence ID" value="ENSP00000347538.2"/>
    <property type="gene ID" value="ENSG00000103528.17"/>
</dbReference>
<dbReference type="GeneID" id="51760"/>
<dbReference type="KEGG" id="hsa:51760"/>
<dbReference type="MANE-Select" id="ENST00000355377.7">
    <property type="protein sequence ID" value="ENSP00000347538.2"/>
    <property type="RefSeq nucleotide sequence ID" value="NM_016524.4"/>
    <property type="RefSeq protein sequence ID" value="NP_057608.2"/>
</dbReference>
<dbReference type="UCSC" id="uc002dfw.4">
    <property type="organism name" value="human"/>
</dbReference>
<dbReference type="AGR" id="HGNC:24119"/>
<dbReference type="CTD" id="51760"/>
<dbReference type="DisGeNET" id="51760"/>
<dbReference type="GeneCards" id="SYT17"/>
<dbReference type="HGNC" id="HGNC:24119">
    <property type="gene designation" value="SYT17"/>
</dbReference>
<dbReference type="HPA" id="ENSG00000103528">
    <property type="expression patterns" value="Tissue enhanced (brain, parathyroid gland)"/>
</dbReference>
<dbReference type="neXtProt" id="NX_Q9BSW7"/>
<dbReference type="OpenTargets" id="ENSG00000103528"/>
<dbReference type="PharmGKB" id="PA142670841"/>
<dbReference type="VEuPathDB" id="HostDB:ENSG00000103528"/>
<dbReference type="eggNOG" id="KOG1028">
    <property type="taxonomic scope" value="Eukaryota"/>
</dbReference>
<dbReference type="GeneTree" id="ENSGT00940000158939"/>
<dbReference type="InParanoid" id="Q9BSW7"/>
<dbReference type="OMA" id="PESSHWR"/>
<dbReference type="OrthoDB" id="270970at2759"/>
<dbReference type="PAN-GO" id="Q9BSW7">
    <property type="GO annotations" value="11 GO annotations based on evolutionary models"/>
</dbReference>
<dbReference type="PhylomeDB" id="Q9BSW7"/>
<dbReference type="TreeFam" id="TF315600"/>
<dbReference type="PathwayCommons" id="Q9BSW7"/>
<dbReference type="SignaLink" id="Q9BSW7"/>
<dbReference type="BioGRID-ORCS" id="51760">
    <property type="hits" value="11 hits in 1150 CRISPR screens"/>
</dbReference>
<dbReference type="ChiTaRS" id="SYT17">
    <property type="organism name" value="human"/>
</dbReference>
<dbReference type="EvolutionaryTrace" id="Q9BSW7"/>
<dbReference type="GenomeRNAi" id="51760"/>
<dbReference type="Pharos" id="Q9BSW7">
    <property type="development level" value="Tbio"/>
</dbReference>
<dbReference type="PRO" id="PR:Q9BSW7"/>
<dbReference type="Proteomes" id="UP000005640">
    <property type="component" value="Chromosome 16"/>
</dbReference>
<dbReference type="RNAct" id="Q9BSW7">
    <property type="molecule type" value="protein"/>
</dbReference>
<dbReference type="Bgee" id="ENSG00000103528">
    <property type="expression patterns" value="Expressed in middle temporal gyrus and 181 other cell types or tissues"/>
</dbReference>
<dbReference type="ExpressionAtlas" id="Q9BSW7">
    <property type="expression patterns" value="baseline and differential"/>
</dbReference>
<dbReference type="GO" id="GO:0070382">
    <property type="term" value="C:exocytic vesicle"/>
    <property type="evidence" value="ECO:0000318"/>
    <property type="project" value="GO_Central"/>
</dbReference>
<dbReference type="GO" id="GO:0098978">
    <property type="term" value="C:glutamatergic synapse"/>
    <property type="evidence" value="ECO:0000314"/>
    <property type="project" value="SynGO"/>
</dbReference>
<dbReference type="GO" id="GO:0005886">
    <property type="term" value="C:plasma membrane"/>
    <property type="evidence" value="ECO:0000318"/>
    <property type="project" value="GO_Central"/>
</dbReference>
<dbReference type="GO" id="GO:0098794">
    <property type="term" value="C:postsynapse"/>
    <property type="evidence" value="ECO:0000314"/>
    <property type="project" value="SynGO"/>
</dbReference>
<dbReference type="GO" id="GO:0005802">
    <property type="term" value="C:trans-Golgi network"/>
    <property type="evidence" value="ECO:0007669"/>
    <property type="project" value="Ensembl"/>
</dbReference>
<dbReference type="GO" id="GO:0061891">
    <property type="term" value="F:calcium ion sensor activity"/>
    <property type="evidence" value="ECO:0000318"/>
    <property type="project" value="GO_Central"/>
</dbReference>
<dbReference type="GO" id="GO:0005544">
    <property type="term" value="F:calcium-dependent phospholipid binding"/>
    <property type="evidence" value="ECO:0000318"/>
    <property type="project" value="GO_Central"/>
</dbReference>
<dbReference type="GO" id="GO:0000149">
    <property type="term" value="F:SNARE binding"/>
    <property type="evidence" value="ECO:0000318"/>
    <property type="project" value="GO_Central"/>
</dbReference>
<dbReference type="GO" id="GO:0030154">
    <property type="term" value="P:cell differentiation"/>
    <property type="evidence" value="ECO:0007669"/>
    <property type="project" value="UniProtKB-KW"/>
</dbReference>
<dbReference type="GO" id="GO:1903861">
    <property type="term" value="P:positive regulation of dendrite extension"/>
    <property type="evidence" value="ECO:0000314"/>
    <property type="project" value="UniProtKB"/>
</dbReference>
<dbReference type="GO" id="GO:0017158">
    <property type="term" value="P:regulation of calcium ion-dependent exocytosis"/>
    <property type="evidence" value="ECO:0000318"/>
    <property type="project" value="GO_Central"/>
</dbReference>
<dbReference type="GO" id="GO:0099149">
    <property type="term" value="P:regulation of postsynaptic neurotransmitter receptor internalization"/>
    <property type="evidence" value="ECO:0000314"/>
    <property type="project" value="SynGO"/>
</dbReference>
<dbReference type="GO" id="GO:0016192">
    <property type="term" value="P:vesicle-mediated transport"/>
    <property type="evidence" value="ECO:0000318"/>
    <property type="project" value="GO_Central"/>
</dbReference>
<dbReference type="CDD" id="cd08390">
    <property type="entry name" value="C2A_Synaptotagmin-15-17"/>
    <property type="match status" value="1"/>
</dbReference>
<dbReference type="CDD" id="cd08410">
    <property type="entry name" value="C2B_Synaptotagmin-17"/>
    <property type="match status" value="1"/>
</dbReference>
<dbReference type="FunFam" id="2.60.40.150:FF:000053">
    <property type="entry name" value="synaptotagmin-17 isoform X1"/>
    <property type="match status" value="1"/>
</dbReference>
<dbReference type="FunFam" id="2.60.40.150:FF:000064">
    <property type="entry name" value="synaptotagmin-17 isoform X1"/>
    <property type="match status" value="1"/>
</dbReference>
<dbReference type="Gene3D" id="2.60.40.150">
    <property type="entry name" value="C2 domain"/>
    <property type="match status" value="2"/>
</dbReference>
<dbReference type="InterPro" id="IPR000008">
    <property type="entry name" value="C2_dom"/>
</dbReference>
<dbReference type="InterPro" id="IPR035892">
    <property type="entry name" value="C2_domain_sf"/>
</dbReference>
<dbReference type="InterPro" id="IPR001565">
    <property type="entry name" value="Synaptotagmin"/>
</dbReference>
<dbReference type="InterPro" id="IPR047897">
    <property type="entry name" value="Synaptotagmin-15/17_C2A"/>
</dbReference>
<dbReference type="InterPro" id="IPR014705">
    <property type="entry name" value="Syt17_C2B"/>
</dbReference>
<dbReference type="PANTHER" id="PTHR10024">
    <property type="entry name" value="SYNAPTOTAGMIN"/>
    <property type="match status" value="1"/>
</dbReference>
<dbReference type="PANTHER" id="PTHR10024:SF348">
    <property type="entry name" value="SYNAPTOTAGMIN-17"/>
    <property type="match status" value="1"/>
</dbReference>
<dbReference type="Pfam" id="PF00168">
    <property type="entry name" value="C2"/>
    <property type="match status" value="2"/>
</dbReference>
<dbReference type="PRINTS" id="PR00399">
    <property type="entry name" value="SYNAPTOTAGMN"/>
</dbReference>
<dbReference type="SMART" id="SM00239">
    <property type="entry name" value="C2"/>
    <property type="match status" value="2"/>
</dbReference>
<dbReference type="SUPFAM" id="SSF49562">
    <property type="entry name" value="C2 domain (Calcium/lipid-binding domain, CaLB)"/>
    <property type="match status" value="2"/>
</dbReference>
<dbReference type="PROSITE" id="PS50004">
    <property type="entry name" value="C2"/>
    <property type="match status" value="2"/>
</dbReference>
<keyword id="KW-0002">3D-structure</keyword>
<keyword id="KW-0221">Differentiation</keyword>
<keyword id="KW-0472">Membrane</keyword>
<keyword id="KW-0597">Phosphoprotein</keyword>
<keyword id="KW-1267">Proteomics identification</keyword>
<keyword id="KW-1185">Reference proteome</keyword>
<keyword id="KW-0677">Repeat</keyword>
<protein>
    <recommendedName>
        <fullName>Synaptotagmin-17</fullName>
    </recommendedName>
    <alternativeName>
        <fullName>Protein B/K</fullName>
    </alternativeName>
    <alternativeName>
        <fullName>Synaptotagmin XVII</fullName>
        <shortName>SytXVII</shortName>
    </alternativeName>
</protein>
<accession>Q9BSW7</accession>
<accession>O43330</accession>
<accession>Q9NZ18</accession>
<name>SYT17_HUMAN</name>
<gene>
    <name type="primary">SYT17</name>
</gene>
<reference key="1">
    <citation type="journal article" date="2006" name="Exp. Mol. Med.">
        <title>Protein kinase A-dependent phosphorylation of B/K protein.</title>
        <authorList>
            <person name="Chin H."/>
            <person name="Choi S.-H."/>
            <person name="Jang Y.-S."/>
            <person name="Cho S.-M."/>
            <person name="Kim H.-S."/>
            <person name="Lee J.-H."/>
            <person name="Jeong S.-W."/>
            <person name="Kim I.-K."/>
            <person name="Kim G.J."/>
            <person name="Kwon O.-J."/>
        </authorList>
    </citation>
    <scope>NUCLEOTIDE SEQUENCE [MRNA]</scope>
    <scope>TISSUE SPECIFICITY</scope>
</reference>
<reference key="2">
    <citation type="submission" date="2005-07" db="EMBL/GenBank/DDBJ databases">
        <authorList>
            <person name="Mural R.J."/>
            <person name="Istrail S."/>
            <person name="Sutton G.G."/>
            <person name="Florea L."/>
            <person name="Halpern A.L."/>
            <person name="Mobarry C.M."/>
            <person name="Lippert R."/>
            <person name="Walenz B."/>
            <person name="Shatkay H."/>
            <person name="Dew I."/>
            <person name="Miller J.R."/>
            <person name="Flanigan M.J."/>
            <person name="Edwards N.J."/>
            <person name="Bolanos R."/>
            <person name="Fasulo D."/>
            <person name="Halldorsson B.V."/>
            <person name="Hannenhalli S."/>
            <person name="Turner R."/>
            <person name="Yooseph S."/>
            <person name="Lu F."/>
            <person name="Nusskern D.R."/>
            <person name="Shue B.C."/>
            <person name="Zheng X.H."/>
            <person name="Zhong F."/>
            <person name="Delcher A.L."/>
            <person name="Huson D.H."/>
            <person name="Kravitz S.A."/>
            <person name="Mouchard L."/>
            <person name="Reinert K."/>
            <person name="Remington K.A."/>
            <person name="Clark A.G."/>
            <person name="Waterman M.S."/>
            <person name="Eichler E.E."/>
            <person name="Adams M.D."/>
            <person name="Hunkapiller M.W."/>
            <person name="Myers E.W."/>
            <person name="Venter J.C."/>
        </authorList>
    </citation>
    <scope>NUCLEOTIDE SEQUENCE [LARGE SCALE GENOMIC DNA]</scope>
</reference>
<reference key="3">
    <citation type="journal article" date="2004" name="Genome Res.">
        <title>The status, quality, and expansion of the NIH full-length cDNA project: the Mammalian Gene Collection (MGC).</title>
        <authorList>
            <consortium name="The MGC Project Team"/>
        </authorList>
    </citation>
    <scope>NUCLEOTIDE SEQUENCE [LARGE SCALE MRNA]</scope>
    <source>
        <tissue>Lung</tissue>
    </source>
</reference>
<reference key="4">
    <citation type="journal article" date="1999" name="Genomics">
        <title>Genome duplications and other features in 12 Mb of DNA sequence from human chromosome 16p and 16q.</title>
        <authorList>
            <person name="Loftus B.J."/>
            <person name="Kim U.-J."/>
            <person name="Sneddon V.P."/>
            <person name="Kalush F."/>
            <person name="Brandon R."/>
            <person name="Fuhrmann J."/>
            <person name="Mason T."/>
            <person name="Crosby M.L."/>
            <person name="Barnstead M."/>
            <person name="Cronin L."/>
            <person name="Mays A.D."/>
            <person name="Cao Y."/>
            <person name="Xu R.X."/>
            <person name="Kang H.-L."/>
            <person name="Mitchell S."/>
            <person name="Eichler E.E."/>
            <person name="Harris P.C."/>
            <person name="Venter J.C."/>
            <person name="Adams M.D."/>
        </authorList>
    </citation>
    <scope>NUCLEOTIDE SEQUENCE [LARGE SCALE GENOMIC DNA] OF 114-474</scope>
</reference>
<reference key="5">
    <citation type="journal article" date="2013" name="J. Dermatol. Sci.">
        <title>SYT14L, especially its C2 domain, is involved in regulating melanocyte differentiation.</title>
        <authorList>
            <person name="Yoo J.C."/>
            <person name="Lim T.Y."/>
            <person name="Park J.S."/>
            <person name="Hah Y.S."/>
            <person name="Park N."/>
            <person name="Hong S.G."/>
            <person name="Park J.Y."/>
            <person name="Yoon T.J."/>
        </authorList>
    </citation>
    <scope>FUNCTION</scope>
    <scope>TISSUE SPECIFICITY</scope>
</reference>
<reference key="6">
    <citation type="submission" date="2009-02" db="PDB data bank">
        <title>Solution structure of the first C2 domain from human B/K protein.</title>
        <authorList>
            <consortium name="RIKEN structural genomics initiative (RSGI)"/>
        </authorList>
    </citation>
    <scope>STRUCTURE BY NMR OF 181-315</scope>
</reference>
<sequence>MAYIQLEPLNEGFLSRISGLLLCRWTCRHCCQKCYESSCCQSSEDEVEILGPFPAQTPPWLMASRSSDKDGDSVHTASEVPLTPRTNSPDGRRSSSDTSKSTYSLTRRISSLESRRPSSPLIDIKPIEFGVLSAKKEPIQPSVLRRTYNPDDYFRKFEPHLYSLDSNSDDVDSLTDEEILSKYQLGMLHFSTQYDLLHNHLTVRVIEARDLPPPISHDGSRQDMAHSNPYVKICLLPDQKNSKQTGVKRKTQKPVFEERYTFEIPFLEAQRRTLLLTVVDFDKFSRHCVIGKVSVPLCEVDLVKGGHWWKALIPSSQNEVELGELLLSLNYLPSAGRLNVDVIRAKQLLQTDVSQGSDPFVKIQLVHGLKLVKTKKTSFLRGTIDPFYNESFSFKVPQEELENASLVFTVFGHNMKSSNDFIGRIVIGQYSSGPSETNHWRRMLNTHRTAVEQWHSLRSRAECDRVSPASLEVT</sequence>
<comment type="function">
    <text evidence="6">Plays a role in dendrite formation by melanocytes (PubMed:23999003).</text>
</comment>
<comment type="interaction">
    <interactant intactId="EBI-745392">
        <id>Q9BSW7</id>
    </interactant>
    <interactant intactId="EBI-8466265">
        <id>Q96MA6</id>
        <label>AK8</label>
    </interactant>
    <organismsDiffer>false</organismsDiffer>
    <experiments>3</experiments>
</comment>
<comment type="interaction">
    <interactant intactId="EBI-745392">
        <id>Q9BSW7</id>
    </interactant>
    <interactant intactId="EBI-2548012">
        <id>Q9H2G9</id>
        <label>BLZF1</label>
    </interactant>
    <organismsDiffer>false</organismsDiffer>
    <experiments>3</experiments>
</comment>
<comment type="interaction">
    <interactant intactId="EBI-745392">
        <id>Q9BSW7</id>
    </interactant>
    <interactant intactId="EBI-11524851">
        <id>Q8NA61-2</id>
        <label>CBY2</label>
    </interactant>
    <organismsDiffer>false</organismsDiffer>
    <experiments>3</experiments>
</comment>
<comment type="interaction">
    <interactant intactId="EBI-745392">
        <id>Q9BSW7</id>
    </interactant>
    <interactant intactId="EBI-10171570">
        <id>Q68D86</id>
        <label>CCDC102B</label>
    </interactant>
    <organismsDiffer>false</organismsDiffer>
    <experiments>3</experiments>
</comment>
<comment type="interaction">
    <interactant intactId="EBI-745392">
        <id>Q9BSW7</id>
    </interactant>
    <interactant intactId="EBI-745269">
        <id>Q9NPC3</id>
        <label>CCNB1IP1</label>
    </interactant>
    <organismsDiffer>false</organismsDiffer>
    <experiments>3</experiments>
</comment>
<comment type="interaction">
    <interactant intactId="EBI-745392">
        <id>Q9BSW7</id>
    </interactant>
    <interactant intactId="EBI-741977">
        <id>Q96MT8</id>
        <label>CEP63</label>
    </interactant>
    <organismsDiffer>false</organismsDiffer>
    <experiments>3</experiments>
</comment>
<comment type="interaction">
    <interactant intactId="EBI-745392">
        <id>Q9BSW7</id>
    </interactant>
    <interactant intactId="EBI-739624">
        <id>Q8NHQ1</id>
        <label>CEP70</label>
    </interactant>
    <organismsDiffer>false</organismsDiffer>
    <experiments>3</experiments>
</comment>
<comment type="interaction">
    <interactant intactId="EBI-745392">
        <id>Q9BSW7</id>
    </interactant>
    <interactant intactId="EBI-747981">
        <id>Q9BY43</id>
        <label>CHMP4A</label>
    </interactant>
    <organismsDiffer>false</organismsDiffer>
    <experiments>6</experiments>
</comment>
<comment type="interaction">
    <interactant intactId="EBI-745392">
        <id>Q9BSW7</id>
    </interactant>
    <interactant intactId="EBI-12178895">
        <id>Q9BY43-2</id>
        <label>CHMP4A</label>
    </interactant>
    <organismsDiffer>false</organismsDiffer>
    <experiments>3</experiments>
</comment>
<comment type="interaction">
    <interactant intactId="EBI-745392">
        <id>Q9BSW7</id>
    </interactant>
    <interactant intactId="EBI-3866319">
        <id>Q9Y2V7</id>
        <label>COG6</label>
    </interactant>
    <organismsDiffer>false</organismsDiffer>
    <experiments>3</experiments>
</comment>
<comment type="interaction">
    <interactant intactId="EBI-745392">
        <id>Q9BSW7</id>
    </interactant>
    <interactant intactId="EBI-12366971">
        <id>O75140-2</id>
        <label>DEPDC5</label>
    </interactant>
    <organismsDiffer>false</organismsDiffer>
    <experiments>3</experiments>
</comment>
<comment type="interaction">
    <interactant intactId="EBI-745392">
        <id>Q9BSW7</id>
    </interactant>
    <interactant intactId="EBI-742102">
        <id>Q8IYI6</id>
        <label>EXOC8</label>
    </interactant>
    <organismsDiffer>false</organismsDiffer>
    <experiments>3</experiments>
</comment>
<comment type="interaction">
    <interactant intactId="EBI-745392">
        <id>Q9BSW7</id>
    </interactant>
    <interactant intactId="EBI-10175124">
        <id>Q8IZU0</id>
        <label>FAM9B</label>
    </interactant>
    <organismsDiffer>false</organismsDiffer>
    <experiments>4</experiments>
</comment>
<comment type="interaction">
    <interactant intactId="EBI-745392">
        <id>Q9BSW7</id>
    </interactant>
    <interactant intactId="EBI-10172181">
        <id>Q53SE7</id>
        <label>FLJ13057</label>
    </interactant>
    <organismsDiffer>false</organismsDiffer>
    <experiments>3</experiments>
</comment>
<comment type="interaction">
    <interactant intactId="EBI-745392">
        <id>Q9BSW7</id>
    </interactant>
    <interactant intactId="EBI-13213391">
        <id>Q96NE9-2</id>
        <label>FRMD6</label>
    </interactant>
    <organismsDiffer>false</organismsDiffer>
    <experiments>3</experiments>
</comment>
<comment type="interaction">
    <interactant intactId="EBI-745392">
        <id>Q9BSW7</id>
    </interactant>
    <interactant intactId="EBI-618309">
        <id>Q08379</id>
        <label>GOLGA2</label>
    </interactant>
    <organismsDiffer>false</organismsDiffer>
    <experiments>3</experiments>
</comment>
<comment type="interaction">
    <interactant intactId="EBI-745392">
        <id>Q9BSW7</id>
    </interactant>
    <interactant intactId="EBI-11163335">
        <id>Q9NYA3</id>
        <label>GOLGA6A</label>
    </interactant>
    <organismsDiffer>false</organismsDiffer>
    <experiments>5</experiments>
</comment>
<comment type="interaction">
    <interactant intactId="EBI-745392">
        <id>Q9BSW7</id>
    </interactant>
    <interactant intactId="EBI-473886">
        <id>O00291</id>
        <label>HIP1</label>
    </interactant>
    <organismsDiffer>false</organismsDiffer>
    <experiments>3</experiments>
</comment>
<comment type="interaction">
    <interactant intactId="EBI-745392">
        <id>Q9BSW7</id>
    </interactant>
    <interactant intactId="EBI-10961706">
        <id>Q96ED9-2</id>
        <label>HOOK2</label>
    </interactant>
    <organismsDiffer>false</organismsDiffer>
    <experiments>3</experiments>
</comment>
<comment type="interaction">
    <interactant intactId="EBI-745392">
        <id>Q9BSW7</id>
    </interactant>
    <interactant intactId="EBI-745305">
        <id>Q13422</id>
        <label>IKZF1</label>
    </interactant>
    <organismsDiffer>false</organismsDiffer>
    <experiments>3</experiments>
</comment>
<comment type="interaction">
    <interactant intactId="EBI-745392">
        <id>Q9BSW7</id>
    </interactant>
    <interactant intactId="EBI-348372">
        <id>Q9UK45</id>
        <label>LSM7</label>
    </interactant>
    <organismsDiffer>false</organismsDiffer>
    <experiments>3</experiments>
</comment>
<comment type="interaction">
    <interactant intactId="EBI-745392">
        <id>Q9BSW7</id>
    </interactant>
    <interactant intactId="EBI-1216080">
        <id>Q9Y250</id>
        <label>LZTS1</label>
    </interactant>
    <organismsDiffer>false</organismsDiffer>
    <experiments>3</experiments>
</comment>
<comment type="interaction">
    <interactant intactId="EBI-745392">
        <id>Q9BSW7</id>
    </interactant>
    <interactant intactId="EBI-741037">
        <id>Q9BRK4</id>
        <label>LZTS2</label>
    </interactant>
    <organismsDiffer>false</organismsDiffer>
    <experiments>3</experiments>
</comment>
<comment type="interaction">
    <interactant intactId="EBI-745392">
        <id>Q9BSW7</id>
    </interactant>
    <interactant intactId="EBI-742610">
        <id>Q9Y6D9</id>
        <label>MAD1L1</label>
    </interactant>
    <organismsDiffer>false</organismsDiffer>
    <experiments>3</experiments>
</comment>
<comment type="interaction">
    <interactant intactId="EBI-745392">
        <id>Q9BSW7</id>
    </interactant>
    <interactant intactId="EBI-18015780">
        <id>Q3KP22-3</id>
        <label>MAJIN</label>
    </interactant>
    <organismsDiffer>false</organismsDiffer>
    <experiments>3</experiments>
</comment>
<comment type="interaction">
    <interactant intactId="EBI-745392">
        <id>Q9BSW7</id>
    </interactant>
    <interactant intactId="EBI-307531">
        <id>P23508</id>
        <label>MCC</label>
    </interactant>
    <organismsDiffer>false</organismsDiffer>
    <experiments>3</experiments>
</comment>
<comment type="interaction">
    <interactant intactId="EBI-745392">
        <id>Q9BSW7</id>
    </interactant>
    <interactant intactId="EBI-2864512">
        <id>P50221</id>
        <label>MEOX1</label>
    </interactant>
    <organismsDiffer>false</organismsDiffer>
    <experiments>3</experiments>
</comment>
<comment type="interaction">
    <interactant intactId="EBI-745392">
        <id>Q9BSW7</id>
    </interactant>
    <interactant intactId="EBI-748397">
        <id>P50222</id>
        <label>MEOX2</label>
    </interactant>
    <organismsDiffer>false</organismsDiffer>
    <experiments>3</experiments>
</comment>
<comment type="interaction">
    <interactant intactId="EBI-745392">
        <id>Q9BSW7</id>
    </interactant>
    <interactant intactId="EBI-16439278">
        <id>Q6FHY5</id>
        <label>MEOX2</label>
    </interactant>
    <organismsDiffer>false</organismsDiffer>
    <experiments>3</experiments>
</comment>
<comment type="interaction">
    <interactant intactId="EBI-745392">
        <id>Q9BSW7</id>
    </interactant>
    <interactant intactId="EBI-10172526">
        <id>Q9UJV3-2</id>
        <label>MID2</label>
    </interactant>
    <organismsDiffer>false</organismsDiffer>
    <experiments>10</experiments>
</comment>
<comment type="interaction">
    <interactant intactId="EBI-745392">
        <id>Q9BSW7</id>
    </interactant>
    <interactant intactId="EBI-740897">
        <id>Q9GZT8</id>
        <label>NIF3L1</label>
    </interactant>
    <organismsDiffer>false</organismsDiffer>
    <experiments>3</experiments>
</comment>
<comment type="interaction">
    <interactant intactId="EBI-745392">
        <id>Q9BSW7</id>
    </interactant>
    <interactant intactId="EBI-357275">
        <id>Q99471</id>
        <label>PFDN5</label>
    </interactant>
    <organismsDiffer>false</organismsDiffer>
    <experiments>3</experiments>
</comment>
<comment type="interaction">
    <interactant intactId="EBI-745392">
        <id>Q9BSW7</id>
    </interactant>
    <interactant intactId="EBI-14066006">
        <id>Q4G0R1</id>
        <label>PIBF1</label>
    </interactant>
    <organismsDiffer>false</organismsDiffer>
    <experiments>3</experiments>
</comment>
<comment type="interaction">
    <interactant intactId="EBI-745392">
        <id>Q9BSW7</id>
    </interactant>
    <interactant intactId="EBI-79165">
        <id>Q9NRD5</id>
        <label>PICK1</label>
    </interactant>
    <organismsDiffer>false</organismsDiffer>
    <experiments>3</experiments>
</comment>
<comment type="interaction">
    <interactant intactId="EBI-745392">
        <id>Q9BSW7</id>
    </interactant>
    <interactant intactId="EBI-11986735">
        <id>Q8WVV4-1</id>
        <label>POF1B</label>
    </interactant>
    <organismsDiffer>false</organismsDiffer>
    <experiments>3</experiments>
</comment>
<comment type="interaction">
    <interactant intactId="EBI-745392">
        <id>Q9BSW7</id>
    </interactant>
    <interactant intactId="EBI-747225">
        <id>Q59EK9</id>
        <label>RUNDC3A</label>
    </interactant>
    <organismsDiffer>false</organismsDiffer>
    <experiments>3</experiments>
</comment>
<comment type="interaction">
    <interactant intactId="EBI-745392">
        <id>Q9BSW7</id>
    </interactant>
    <interactant intactId="EBI-742426">
        <id>Q9H190</id>
        <label>SDCBP2</label>
    </interactant>
    <organismsDiffer>false</organismsDiffer>
    <experiments>3</experiments>
</comment>
<comment type="interaction">
    <interactant intactId="EBI-745392">
        <id>Q9BSW7</id>
    </interactant>
    <interactant intactId="EBI-12938570">
        <id>Q16560-2</id>
        <label>SNRNP35</label>
    </interactant>
    <organismsDiffer>false</organismsDiffer>
    <experiments>3</experiments>
</comment>
<comment type="interaction">
    <interactant intactId="EBI-745392">
        <id>Q9BSW7</id>
    </interactant>
    <interactant intactId="EBI-2212028">
        <id>Q9Y2D8</id>
        <label>SSX2IP</label>
    </interactant>
    <organismsDiffer>false</organismsDiffer>
    <experiments>3</experiments>
</comment>
<comment type="interaction">
    <interactant intactId="EBI-745392">
        <id>Q9BSW7</id>
    </interactant>
    <interactant intactId="EBI-355744">
        <id>Q12933</id>
        <label>TRAF2</label>
    </interactant>
    <organismsDiffer>false</organismsDiffer>
    <experiments>6</experiments>
</comment>
<comment type="interaction">
    <interactant intactId="EBI-745392">
        <id>Q9BSW7</id>
    </interactant>
    <interactant intactId="EBI-719493">
        <id>P14373</id>
        <label>TRIM27</label>
    </interactant>
    <organismsDiffer>false</organismsDiffer>
    <experiments>3</experiments>
</comment>
<comment type="interaction">
    <interactant intactId="EBI-745392">
        <id>Q9BSW7</id>
    </interactant>
    <interactant intactId="EBI-21353855">
        <id>Q99598</id>
        <label>TSNAX</label>
    </interactant>
    <organismsDiffer>false</organismsDiffer>
    <experiments>3</experiments>
</comment>
<comment type="interaction">
    <interactant intactId="EBI-745392">
        <id>Q9BSW7</id>
    </interactant>
    <interactant intactId="EBI-9031083">
        <id>Q9Y2B5</id>
        <label>VPS9D1</label>
    </interactant>
    <organismsDiffer>false</organismsDiffer>
    <experiments>3</experiments>
</comment>
<comment type="interaction">
    <interactant intactId="EBI-745392">
        <id>Q9BSW7</id>
    </interactant>
    <interactant intactId="EBI-11962468">
        <id>Q7Z4V0</id>
        <label>ZNF438</label>
    </interactant>
    <organismsDiffer>false</organismsDiffer>
    <experiments>3</experiments>
</comment>
<comment type="interaction">
    <interactant intactId="EBI-745392">
        <id>Q9BSW7</id>
    </interactant>
    <interactant intactId="EBI-9091553">
        <id>Q96LX8</id>
        <label>ZNF597</label>
    </interactant>
    <organismsDiffer>false</organismsDiffer>
    <experiments>3</experiments>
</comment>
<comment type="interaction">
    <interactant intactId="EBI-745392">
        <id>Q9BSW7</id>
    </interactant>
    <interactant intactId="EBI-527853">
        <id>Q9UGI0</id>
        <label>ZRANB1</label>
    </interactant>
    <organismsDiffer>false</organismsDiffer>
    <experiments>3</experiments>
</comment>
<comment type="subcellular location">
    <subcellularLocation>
        <location evidence="1">Membrane</location>
        <topology evidence="1">Peripheral membrane protein</topology>
    </subcellularLocation>
</comment>
<comment type="tissue specificity">
    <text evidence="5 6">Expressed abundantly in brain (frontal and temporal lobes, hippocampus, hypothalamus, amygdala, substantia nigra, and pituitary), kidney, and prostate. Expressed in fetal brain, kidney and lung (PubMed:16672768). Expressed in melanocytes (PubMed:23999003).</text>
</comment>
<comment type="similarity">
    <text evidence="7">Belongs to the synaptotagmin family.</text>
</comment>
<evidence type="ECO:0000250" key="1"/>
<evidence type="ECO:0000250" key="2">
    <source>
        <dbReference type="UniProtKB" id="Q920M7"/>
    </source>
</evidence>
<evidence type="ECO:0000255" key="3">
    <source>
        <dbReference type="PROSITE-ProRule" id="PRU00041"/>
    </source>
</evidence>
<evidence type="ECO:0000256" key="4">
    <source>
        <dbReference type="SAM" id="MobiDB-lite"/>
    </source>
</evidence>
<evidence type="ECO:0000269" key="5">
    <source>
    </source>
</evidence>
<evidence type="ECO:0000269" key="6">
    <source>
    </source>
</evidence>
<evidence type="ECO:0000305" key="7"/>
<evidence type="ECO:0007829" key="8">
    <source>
        <dbReference type="PDB" id="2ENP"/>
    </source>
</evidence>
<proteinExistence type="evidence at protein level"/>